<proteinExistence type="inferred from homology"/>
<gene>
    <name type="ordered locus">Maeo_0138</name>
</gene>
<dbReference type="EMBL" id="CP000743">
    <property type="protein sequence ID" value="ABR55730.1"/>
    <property type="molecule type" value="Genomic_DNA"/>
</dbReference>
<dbReference type="RefSeq" id="WP_011972862.1">
    <property type="nucleotide sequence ID" value="NC_009635.1"/>
</dbReference>
<dbReference type="SMR" id="A6UTA8"/>
<dbReference type="STRING" id="419665.Maeo_0138"/>
<dbReference type="GeneID" id="5326252"/>
<dbReference type="KEGG" id="mae:Maeo_0138"/>
<dbReference type="eggNOG" id="arCOG01336">
    <property type="taxonomic scope" value="Archaea"/>
</dbReference>
<dbReference type="HOGENOM" id="CLU_095686_1_1_2"/>
<dbReference type="OrthoDB" id="25187at2157"/>
<dbReference type="Proteomes" id="UP000001106">
    <property type="component" value="Chromosome"/>
</dbReference>
<dbReference type="Gene3D" id="3.30.700.20">
    <property type="entry name" value="Hypothetical protein ph0010, domain 1"/>
    <property type="match status" value="1"/>
</dbReference>
<dbReference type="Gene3D" id="3.30.1490.150">
    <property type="entry name" value="Hypothetical protein ph0010, domain 2"/>
    <property type="match status" value="1"/>
</dbReference>
<dbReference type="HAMAP" id="MF_00645">
    <property type="entry name" value="AMMECR1"/>
    <property type="match status" value="1"/>
</dbReference>
<dbReference type="InterPro" id="IPR023473">
    <property type="entry name" value="AMMECR1"/>
</dbReference>
<dbReference type="InterPro" id="IPR036071">
    <property type="entry name" value="AMMECR1_dom_sf"/>
</dbReference>
<dbReference type="InterPro" id="IPR002733">
    <property type="entry name" value="AMMECR1_domain"/>
</dbReference>
<dbReference type="InterPro" id="IPR027485">
    <property type="entry name" value="AMMECR1_N"/>
</dbReference>
<dbReference type="InterPro" id="IPR027623">
    <property type="entry name" value="AmmeMemoSam_A"/>
</dbReference>
<dbReference type="InterPro" id="IPR023472">
    <property type="entry name" value="Uncharacterised_MJ0810"/>
</dbReference>
<dbReference type="NCBIfam" id="TIGR04335">
    <property type="entry name" value="AmmeMemoSam_A"/>
    <property type="match status" value="1"/>
</dbReference>
<dbReference type="NCBIfam" id="TIGR00296">
    <property type="entry name" value="TIGR00296 family protein"/>
    <property type="match status" value="1"/>
</dbReference>
<dbReference type="PANTHER" id="PTHR13016:SF0">
    <property type="entry name" value="AMME SYNDROME CANDIDATE GENE 1 PROTEIN"/>
    <property type="match status" value="1"/>
</dbReference>
<dbReference type="PANTHER" id="PTHR13016">
    <property type="entry name" value="AMMECR1 HOMOLOG"/>
    <property type="match status" value="1"/>
</dbReference>
<dbReference type="Pfam" id="PF01871">
    <property type="entry name" value="AMMECR1"/>
    <property type="match status" value="1"/>
</dbReference>
<dbReference type="SUPFAM" id="SSF143447">
    <property type="entry name" value="AMMECR1-like"/>
    <property type="match status" value="1"/>
</dbReference>
<dbReference type="PROSITE" id="PS51112">
    <property type="entry name" value="AMMECR1"/>
    <property type="match status" value="1"/>
</dbReference>
<feature type="chain" id="PRO_1000082705" description="Protein Maeo_0138">
    <location>
        <begin position="1"/>
        <end position="199"/>
    </location>
</feature>
<feature type="domain" description="AMMECR1" evidence="1">
    <location>
        <begin position="7"/>
        <end position="197"/>
    </location>
</feature>
<sequence length="199" mass="22524">MEKLSFEEGKFAVKFARINIECYLSGVHYVVDDLPPIFKKPRGVFTTLYTYPKRNLRGCIGIPEPVMPLIDALKEASISASVDDPRFPPVGRMELRDITIEISILTPPKLVEANSPADYLEKIKVGRDGLIIEYGTYRGLLLPQVPIEHNWDIGEYLANLCLKAGLPVDTWIKKKVNIYSFESQIFKELSPNGKIVEEK</sequence>
<accession>A6UTA8</accession>
<name>Y138_META3</name>
<evidence type="ECO:0000255" key="1">
    <source>
        <dbReference type="HAMAP-Rule" id="MF_00645"/>
    </source>
</evidence>
<reference key="1">
    <citation type="submission" date="2007-06" db="EMBL/GenBank/DDBJ databases">
        <title>Complete sequence of Methanococcus aeolicus Nankai-3.</title>
        <authorList>
            <consortium name="US DOE Joint Genome Institute"/>
            <person name="Copeland A."/>
            <person name="Lucas S."/>
            <person name="Lapidus A."/>
            <person name="Barry K."/>
            <person name="Glavina del Rio T."/>
            <person name="Dalin E."/>
            <person name="Tice H."/>
            <person name="Pitluck S."/>
            <person name="Chain P."/>
            <person name="Malfatti S."/>
            <person name="Shin M."/>
            <person name="Vergez L."/>
            <person name="Schmutz J."/>
            <person name="Larimer F."/>
            <person name="Land M."/>
            <person name="Hauser L."/>
            <person name="Kyrpides N."/>
            <person name="Lykidis A."/>
            <person name="Sieprawska-Lupa M."/>
            <person name="Whitman W.B."/>
            <person name="Richardson P."/>
        </authorList>
    </citation>
    <scope>NUCLEOTIDE SEQUENCE [LARGE SCALE GENOMIC DNA]</scope>
    <source>
        <strain>ATCC BAA-1280 / DSM 17508 / OCM 812 / Nankai-3</strain>
    </source>
</reference>
<protein>
    <recommendedName>
        <fullName evidence="1">Protein Maeo_0138</fullName>
    </recommendedName>
</protein>
<organism>
    <name type="scientific">Methanococcus aeolicus (strain ATCC BAA-1280 / DSM 17508 / OCM 812 / Nankai-3)</name>
    <dbReference type="NCBI Taxonomy" id="419665"/>
    <lineage>
        <taxon>Archaea</taxon>
        <taxon>Methanobacteriati</taxon>
        <taxon>Methanobacteriota</taxon>
        <taxon>Methanomada group</taxon>
        <taxon>Methanococci</taxon>
        <taxon>Methanococcales</taxon>
        <taxon>Methanococcaceae</taxon>
        <taxon>Methanococcus</taxon>
    </lineage>
</organism>